<protein>
    <recommendedName>
        <fullName evidence="3">Frontoxin III</fullName>
        <shortName evidence="3">FTx III</shortName>
    </recommendedName>
</protein>
<comment type="function">
    <text evidence="2">Binds to muscle nicotinic acetylcholine receptor (nAChR) and inhibit acetylcholine from binding to the receptor, thereby impairing neuromuscular transmission.</text>
</comment>
<comment type="subcellular location">
    <subcellularLocation>
        <location evidence="2">Secreted</location>
    </subcellularLocation>
</comment>
<comment type="tissue specificity">
    <text evidence="4">Expressed by the venom gland.</text>
</comment>
<comment type="mass spectrometry"/>
<comment type="similarity">
    <text evidence="4">Belongs to the three-finger toxin family. Short-chain subfamily. Type I alpha-neurotoxin sub-subfamily.</text>
</comment>
<keyword id="KW-0008">Acetylcholine receptor inhibiting toxin</keyword>
<keyword id="KW-0903">Direct protein sequencing</keyword>
<keyword id="KW-1015">Disulfide bond</keyword>
<keyword id="KW-0872">Ion channel impairing toxin</keyword>
<keyword id="KW-0528">Neurotoxin</keyword>
<keyword id="KW-0629">Postsynaptic neurotoxin</keyword>
<keyword id="KW-0964">Secreted</keyword>
<keyword id="KW-0800">Toxin</keyword>
<proteinExistence type="evidence at protein level"/>
<dbReference type="SMR" id="P86422"/>
<dbReference type="GO" id="GO:0005576">
    <property type="term" value="C:extracellular region"/>
    <property type="evidence" value="ECO:0007669"/>
    <property type="project" value="UniProtKB-SubCell"/>
</dbReference>
<dbReference type="GO" id="GO:0030550">
    <property type="term" value="F:acetylcholine receptor inhibitor activity"/>
    <property type="evidence" value="ECO:0007669"/>
    <property type="project" value="UniProtKB-KW"/>
</dbReference>
<dbReference type="GO" id="GO:0099106">
    <property type="term" value="F:ion channel regulator activity"/>
    <property type="evidence" value="ECO:0007669"/>
    <property type="project" value="UniProtKB-KW"/>
</dbReference>
<dbReference type="GO" id="GO:0090729">
    <property type="term" value="F:toxin activity"/>
    <property type="evidence" value="ECO:0007669"/>
    <property type="project" value="UniProtKB-KW"/>
</dbReference>
<dbReference type="CDD" id="cd00206">
    <property type="entry name" value="TFP_snake_toxin"/>
    <property type="match status" value="1"/>
</dbReference>
<dbReference type="Gene3D" id="2.10.60.10">
    <property type="entry name" value="CD59"/>
    <property type="match status" value="1"/>
</dbReference>
<dbReference type="InterPro" id="IPR003571">
    <property type="entry name" value="Snake_3FTx"/>
</dbReference>
<dbReference type="InterPro" id="IPR045860">
    <property type="entry name" value="Snake_toxin-like_sf"/>
</dbReference>
<dbReference type="InterPro" id="IPR018354">
    <property type="entry name" value="Snake_toxin_con_site"/>
</dbReference>
<dbReference type="InterPro" id="IPR054131">
    <property type="entry name" value="Toxin_cobra-type"/>
</dbReference>
<dbReference type="Pfam" id="PF21947">
    <property type="entry name" value="Toxin_cobra-type"/>
    <property type="match status" value="1"/>
</dbReference>
<dbReference type="SUPFAM" id="SSF57302">
    <property type="entry name" value="Snake toxin-like"/>
    <property type="match status" value="1"/>
</dbReference>
<dbReference type="PROSITE" id="PS00272">
    <property type="entry name" value="SNAKE_TOXIN"/>
    <property type="match status" value="1"/>
</dbReference>
<accession>P86422</accession>
<organism>
    <name type="scientific">Micrurus frontalis</name>
    <name type="common">Coral snake</name>
    <dbReference type="NCBI Taxonomy" id="129461"/>
    <lineage>
        <taxon>Eukaryota</taxon>
        <taxon>Metazoa</taxon>
        <taxon>Chordata</taxon>
        <taxon>Craniata</taxon>
        <taxon>Vertebrata</taxon>
        <taxon>Euteleostomi</taxon>
        <taxon>Lepidosauria</taxon>
        <taxon>Squamata</taxon>
        <taxon>Bifurcata</taxon>
        <taxon>Unidentata</taxon>
        <taxon>Episquamata</taxon>
        <taxon>Toxicofera</taxon>
        <taxon>Serpentes</taxon>
        <taxon>Colubroidea</taxon>
        <taxon>Elapidae</taxon>
        <taxon>Elapinae</taxon>
        <taxon>Micrurus</taxon>
    </lineage>
</organism>
<feature type="chain" id="PRO_0000394461" description="Frontoxin III" evidence="2">
    <location>
        <begin position="1"/>
        <end position="62"/>
    </location>
</feature>
<feature type="disulfide bond" evidence="1">
    <location>
        <begin position="3"/>
        <end position="24"/>
    </location>
</feature>
<feature type="disulfide bond" evidence="1">
    <location>
        <begin position="17"/>
        <end position="41"/>
    </location>
</feature>
<feature type="disulfide bond" evidence="1">
    <location>
        <begin position="43"/>
        <end position="54"/>
    </location>
</feature>
<feature type="disulfide bond" evidence="1">
    <location>
        <begin position="55"/>
        <end position="60"/>
    </location>
</feature>
<sequence>LTCFNDFSPTAHTVEDCQRGITTCYMKTWRVHRETVIERGCGCPKVKPGIRLKCCTGNTCNY</sequence>
<reference key="1">
    <citation type="journal article" date="2010" name="Toxicon">
        <title>Frontoxins, three-finger toxins from Micrurus frontalis venom, decrease miniature endplate potential amplitude at frog neuromuscular junction.</title>
        <authorList>
            <person name="Moreira K.G."/>
            <person name="Prates M.V."/>
            <person name="Andrade F.A."/>
            <person name="Silva L.P."/>
            <person name="Beirao P.S."/>
            <person name="Kushmerick C."/>
            <person name="Naves L.A."/>
            <person name="Bloch C. Jr."/>
        </authorList>
    </citation>
    <scope>PROTEIN SEQUENCE</scope>
    <scope>FUNCTION</scope>
    <scope>SUBCELLULAR LOCATION</scope>
    <scope>MASS SPECTROMETRY</scope>
    <source>
        <tissue evidence="2">Venom</tissue>
    </source>
</reference>
<evidence type="ECO:0000250" key="1">
    <source>
        <dbReference type="UniProtKB" id="P01426"/>
    </source>
</evidence>
<evidence type="ECO:0000269" key="2">
    <source>
    </source>
</evidence>
<evidence type="ECO:0000303" key="3">
    <source>
    </source>
</evidence>
<evidence type="ECO:0000305" key="4"/>
<name>3S13_MICFR</name>